<feature type="chain" id="PRO_0000309692" description="Hydroxyacylglutathione hydrolase">
    <location>
        <begin position="1"/>
        <end position="255"/>
    </location>
</feature>
<feature type="binding site" evidence="1">
    <location>
        <position position="52"/>
    </location>
    <ligand>
        <name>Zn(2+)</name>
        <dbReference type="ChEBI" id="CHEBI:29105"/>
        <label>1</label>
    </ligand>
</feature>
<feature type="binding site" evidence="1">
    <location>
        <position position="54"/>
    </location>
    <ligand>
        <name>Zn(2+)</name>
        <dbReference type="ChEBI" id="CHEBI:29105"/>
        <label>1</label>
    </ligand>
</feature>
<feature type="binding site" evidence="1">
    <location>
        <position position="56"/>
    </location>
    <ligand>
        <name>Zn(2+)</name>
        <dbReference type="ChEBI" id="CHEBI:29105"/>
        <label>2</label>
    </ligand>
</feature>
<feature type="binding site" evidence="1">
    <location>
        <position position="57"/>
    </location>
    <ligand>
        <name>Zn(2+)</name>
        <dbReference type="ChEBI" id="CHEBI:29105"/>
        <label>2</label>
    </ligand>
</feature>
<feature type="binding site" evidence="1">
    <location>
        <position position="108"/>
    </location>
    <ligand>
        <name>Zn(2+)</name>
        <dbReference type="ChEBI" id="CHEBI:29105"/>
        <label>1</label>
    </ligand>
</feature>
<feature type="binding site" evidence="1">
    <location>
        <position position="130"/>
    </location>
    <ligand>
        <name>Zn(2+)</name>
        <dbReference type="ChEBI" id="CHEBI:29105"/>
        <label>1</label>
    </ligand>
</feature>
<feature type="binding site" evidence="1">
    <location>
        <position position="130"/>
    </location>
    <ligand>
        <name>Zn(2+)</name>
        <dbReference type="ChEBI" id="CHEBI:29105"/>
        <label>2</label>
    </ligand>
</feature>
<feature type="binding site" evidence="1">
    <location>
        <position position="168"/>
    </location>
    <ligand>
        <name>Zn(2+)</name>
        <dbReference type="ChEBI" id="CHEBI:29105"/>
        <label>2</label>
    </ligand>
</feature>
<accession>Q21YF8</accession>
<organism>
    <name type="scientific">Albidiferax ferrireducens (strain ATCC BAA-621 / DSM 15236 / T118)</name>
    <name type="common">Rhodoferax ferrireducens</name>
    <dbReference type="NCBI Taxonomy" id="338969"/>
    <lineage>
        <taxon>Bacteria</taxon>
        <taxon>Pseudomonadati</taxon>
        <taxon>Pseudomonadota</taxon>
        <taxon>Betaproteobacteria</taxon>
        <taxon>Burkholderiales</taxon>
        <taxon>Comamonadaceae</taxon>
        <taxon>Rhodoferax</taxon>
    </lineage>
</organism>
<proteinExistence type="inferred from homology"/>
<comment type="function">
    <text evidence="1">Thiolesterase that catalyzes the hydrolysis of S-D-lactoyl-glutathione to form glutathione and D-lactic acid.</text>
</comment>
<comment type="catalytic activity">
    <reaction evidence="1">
        <text>an S-(2-hydroxyacyl)glutathione + H2O = a 2-hydroxy carboxylate + glutathione + H(+)</text>
        <dbReference type="Rhea" id="RHEA:21864"/>
        <dbReference type="ChEBI" id="CHEBI:15377"/>
        <dbReference type="ChEBI" id="CHEBI:15378"/>
        <dbReference type="ChEBI" id="CHEBI:57925"/>
        <dbReference type="ChEBI" id="CHEBI:58896"/>
        <dbReference type="ChEBI" id="CHEBI:71261"/>
        <dbReference type="EC" id="3.1.2.6"/>
    </reaction>
</comment>
<comment type="cofactor">
    <cofactor evidence="1">
        <name>Zn(2+)</name>
        <dbReference type="ChEBI" id="CHEBI:29105"/>
    </cofactor>
    <text evidence="1">Binds 2 Zn(2+) ions per subunit.</text>
</comment>
<comment type="pathway">
    <text evidence="1">Secondary metabolite metabolism; methylglyoxal degradation; (R)-lactate from methylglyoxal: step 2/2.</text>
</comment>
<comment type="subunit">
    <text evidence="1">Monomer.</text>
</comment>
<comment type="similarity">
    <text evidence="1">Belongs to the metallo-beta-lactamase superfamily. Glyoxalase II family.</text>
</comment>
<comment type="sequence caution" evidence="2">
    <conflict type="erroneous initiation">
        <sequence resource="EMBL-CDS" id="ABD69195"/>
    </conflict>
</comment>
<protein>
    <recommendedName>
        <fullName evidence="1">Hydroxyacylglutathione hydrolase</fullName>
        <ecNumber evidence="1">3.1.2.6</ecNumber>
    </recommendedName>
    <alternativeName>
        <fullName evidence="1">Glyoxalase II</fullName>
        <shortName evidence="1">Glx II</shortName>
    </alternativeName>
</protein>
<evidence type="ECO:0000255" key="1">
    <source>
        <dbReference type="HAMAP-Rule" id="MF_01374"/>
    </source>
</evidence>
<evidence type="ECO:0000305" key="2"/>
<reference key="1">
    <citation type="submission" date="2006-02" db="EMBL/GenBank/DDBJ databases">
        <title>Complete sequence of chromosome of Rhodoferax ferrireducens DSM 15236.</title>
        <authorList>
            <person name="Copeland A."/>
            <person name="Lucas S."/>
            <person name="Lapidus A."/>
            <person name="Barry K."/>
            <person name="Detter J.C."/>
            <person name="Glavina del Rio T."/>
            <person name="Hammon N."/>
            <person name="Israni S."/>
            <person name="Pitluck S."/>
            <person name="Brettin T."/>
            <person name="Bruce D."/>
            <person name="Han C."/>
            <person name="Tapia R."/>
            <person name="Gilna P."/>
            <person name="Kiss H."/>
            <person name="Schmutz J."/>
            <person name="Larimer F."/>
            <person name="Land M."/>
            <person name="Kyrpides N."/>
            <person name="Ivanova N."/>
            <person name="Richardson P."/>
        </authorList>
    </citation>
    <scope>NUCLEOTIDE SEQUENCE [LARGE SCALE GENOMIC DNA]</scope>
    <source>
        <strain>ATCC BAA-621 / DSM 15236 / T118</strain>
    </source>
</reference>
<dbReference type="EC" id="3.1.2.6" evidence="1"/>
<dbReference type="EMBL" id="CP000267">
    <property type="protein sequence ID" value="ABD69195.1"/>
    <property type="status" value="ALT_INIT"/>
    <property type="molecule type" value="Genomic_DNA"/>
</dbReference>
<dbReference type="RefSeq" id="WP_041790352.1">
    <property type="nucleotide sequence ID" value="NC_007908.1"/>
</dbReference>
<dbReference type="SMR" id="Q21YF8"/>
<dbReference type="STRING" id="338969.Rfer_1462"/>
<dbReference type="KEGG" id="rfr:Rfer_1462"/>
<dbReference type="eggNOG" id="COG0491">
    <property type="taxonomic scope" value="Bacteria"/>
</dbReference>
<dbReference type="HOGENOM" id="CLU_030571_4_1_4"/>
<dbReference type="OrthoDB" id="9802248at2"/>
<dbReference type="UniPathway" id="UPA00619">
    <property type="reaction ID" value="UER00676"/>
</dbReference>
<dbReference type="Proteomes" id="UP000008332">
    <property type="component" value="Chromosome"/>
</dbReference>
<dbReference type="GO" id="GO:0004416">
    <property type="term" value="F:hydroxyacylglutathione hydrolase activity"/>
    <property type="evidence" value="ECO:0007669"/>
    <property type="project" value="UniProtKB-UniRule"/>
</dbReference>
<dbReference type="GO" id="GO:0046872">
    <property type="term" value="F:metal ion binding"/>
    <property type="evidence" value="ECO:0007669"/>
    <property type="project" value="UniProtKB-KW"/>
</dbReference>
<dbReference type="GO" id="GO:0019243">
    <property type="term" value="P:methylglyoxal catabolic process to D-lactate via S-lactoyl-glutathione"/>
    <property type="evidence" value="ECO:0007669"/>
    <property type="project" value="InterPro"/>
</dbReference>
<dbReference type="CDD" id="cd07723">
    <property type="entry name" value="hydroxyacylglutathione_hydrolase_MBL-fold"/>
    <property type="match status" value="1"/>
</dbReference>
<dbReference type="Gene3D" id="3.60.15.10">
    <property type="entry name" value="Ribonuclease Z/Hydroxyacylglutathione hydrolase-like"/>
    <property type="match status" value="1"/>
</dbReference>
<dbReference type="HAMAP" id="MF_01374">
    <property type="entry name" value="Glyoxalase_2"/>
    <property type="match status" value="1"/>
</dbReference>
<dbReference type="InterPro" id="IPR035680">
    <property type="entry name" value="Clx_II_MBL"/>
</dbReference>
<dbReference type="InterPro" id="IPR050110">
    <property type="entry name" value="Glyoxalase_II_hydrolase"/>
</dbReference>
<dbReference type="InterPro" id="IPR032282">
    <property type="entry name" value="HAGH_C"/>
</dbReference>
<dbReference type="InterPro" id="IPR017782">
    <property type="entry name" value="Hydroxyacylglutathione_Hdrlase"/>
</dbReference>
<dbReference type="InterPro" id="IPR001279">
    <property type="entry name" value="Metallo-B-lactamas"/>
</dbReference>
<dbReference type="InterPro" id="IPR036866">
    <property type="entry name" value="RibonucZ/Hydroxyglut_hydro"/>
</dbReference>
<dbReference type="NCBIfam" id="TIGR03413">
    <property type="entry name" value="GSH_gloB"/>
    <property type="match status" value="1"/>
</dbReference>
<dbReference type="PANTHER" id="PTHR43705">
    <property type="entry name" value="HYDROXYACYLGLUTATHIONE HYDROLASE"/>
    <property type="match status" value="1"/>
</dbReference>
<dbReference type="PANTHER" id="PTHR43705:SF1">
    <property type="entry name" value="HYDROXYACYLGLUTATHIONE HYDROLASE GLOB"/>
    <property type="match status" value="1"/>
</dbReference>
<dbReference type="Pfam" id="PF16123">
    <property type="entry name" value="HAGH_C"/>
    <property type="match status" value="1"/>
</dbReference>
<dbReference type="Pfam" id="PF00753">
    <property type="entry name" value="Lactamase_B"/>
    <property type="match status" value="1"/>
</dbReference>
<dbReference type="PIRSF" id="PIRSF005457">
    <property type="entry name" value="Glx"/>
    <property type="match status" value="1"/>
</dbReference>
<dbReference type="SMART" id="SM00849">
    <property type="entry name" value="Lactamase_B"/>
    <property type="match status" value="1"/>
</dbReference>
<dbReference type="SUPFAM" id="SSF56281">
    <property type="entry name" value="Metallo-hydrolase/oxidoreductase"/>
    <property type="match status" value="1"/>
</dbReference>
<name>GLO2_ALBFT</name>
<gene>
    <name evidence="1" type="primary">gloB</name>
    <name type="ordered locus">Rfer_1462</name>
</gene>
<keyword id="KW-0378">Hydrolase</keyword>
<keyword id="KW-0479">Metal-binding</keyword>
<keyword id="KW-1185">Reference proteome</keyword>
<keyword id="KW-0862">Zinc</keyword>
<sequence>MQLIPLPAFTDNYIWMVHDERHALVVDPGDAQPVLEALQQLGLQLETILVTHHHPDHTGGVAALRAATGAQVFGPAREPMPEPLIRLTGDQQLQALGLNFQVIDVPGHTACHIAYFCADVDGAPLLFCGDTLFSAGCGRLFEGSPAQMLASLDTLAALPDATRVCCAHEYTLSNLKFACAVEPVNQALTDYTVKAEALRSQQQPTLPSSILLERQINPFLRTRQATVTQAVQAFDASARDEVSIFAALRQWKNQF</sequence>